<gene>
    <name evidence="1" type="primary">rpmF</name>
    <name type="ordered locus">MHJ_0267</name>
</gene>
<name>RL32_MESHJ</name>
<organism>
    <name type="scientific">Mesomycoplasma hyopneumoniae (strain J / ATCC 25934 / NCTC 10110)</name>
    <name type="common">Mycoplasma hyopneumoniae</name>
    <dbReference type="NCBI Taxonomy" id="262719"/>
    <lineage>
        <taxon>Bacteria</taxon>
        <taxon>Bacillati</taxon>
        <taxon>Mycoplasmatota</taxon>
        <taxon>Mycoplasmoidales</taxon>
        <taxon>Metamycoplasmataceae</taxon>
        <taxon>Mesomycoplasma</taxon>
    </lineage>
</organism>
<reference key="1">
    <citation type="journal article" date="2005" name="J. Bacteriol.">
        <title>Swine and poultry pathogens: the complete genome sequences of two strains of Mycoplasma hyopneumoniae and a strain of Mycoplasma synoviae.</title>
        <authorList>
            <person name="Vasconcelos A.T.R."/>
            <person name="Ferreira H.B."/>
            <person name="Bizarro C.V."/>
            <person name="Bonatto S.L."/>
            <person name="Carvalho M.O."/>
            <person name="Pinto P.M."/>
            <person name="Almeida D.F."/>
            <person name="Almeida L.G.P."/>
            <person name="Almeida R."/>
            <person name="Alves-Junior L."/>
            <person name="Assuncao E.N."/>
            <person name="Azevedo V.A.C."/>
            <person name="Bogo M.R."/>
            <person name="Brigido M.M."/>
            <person name="Brocchi M."/>
            <person name="Burity H.A."/>
            <person name="Camargo A.A."/>
            <person name="Camargo S.S."/>
            <person name="Carepo M.S."/>
            <person name="Carraro D.M."/>
            <person name="de Mattos Cascardo J.C."/>
            <person name="Castro L.A."/>
            <person name="Cavalcanti G."/>
            <person name="Chemale G."/>
            <person name="Collevatti R.G."/>
            <person name="Cunha C.W."/>
            <person name="Dallagiovanna B."/>
            <person name="Dambros B.P."/>
            <person name="Dellagostin O.A."/>
            <person name="Falcao C."/>
            <person name="Fantinatti-Garboggini F."/>
            <person name="Felipe M.S.S."/>
            <person name="Fiorentin L."/>
            <person name="Franco G.R."/>
            <person name="Freitas N.S.A."/>
            <person name="Frias D."/>
            <person name="Grangeiro T.B."/>
            <person name="Grisard E.C."/>
            <person name="Guimaraes C.T."/>
            <person name="Hungria M."/>
            <person name="Jardim S.N."/>
            <person name="Krieger M.A."/>
            <person name="Laurino J.P."/>
            <person name="Lima L.F.A."/>
            <person name="Lopes M.I."/>
            <person name="Loreto E.L.S."/>
            <person name="Madeira H.M.F."/>
            <person name="Manfio G.P."/>
            <person name="Maranhao A.Q."/>
            <person name="Martinkovics C.T."/>
            <person name="Medeiros S.R.B."/>
            <person name="Moreira M.A.M."/>
            <person name="Neiva M."/>
            <person name="Ramalho-Neto C.E."/>
            <person name="Nicolas M.F."/>
            <person name="Oliveira S.C."/>
            <person name="Paixao R.F.C."/>
            <person name="Pedrosa F.O."/>
            <person name="Pena S.D.J."/>
            <person name="Pereira M."/>
            <person name="Pereira-Ferrari L."/>
            <person name="Piffer I."/>
            <person name="Pinto L.S."/>
            <person name="Potrich D.P."/>
            <person name="Salim A.C.M."/>
            <person name="Santos F.R."/>
            <person name="Schmitt R."/>
            <person name="Schneider M.P.C."/>
            <person name="Schrank A."/>
            <person name="Schrank I.S."/>
            <person name="Schuck A.F."/>
            <person name="Seuanez H.N."/>
            <person name="Silva D.W."/>
            <person name="Silva R."/>
            <person name="Silva S.C."/>
            <person name="Soares C.M.A."/>
            <person name="Souza K.R.L."/>
            <person name="Souza R.C."/>
            <person name="Staats C.C."/>
            <person name="Steffens M.B.R."/>
            <person name="Teixeira S.M.R."/>
            <person name="Urmenyi T.P."/>
            <person name="Vainstein M.H."/>
            <person name="Zuccherato L.W."/>
            <person name="Simpson A.J.G."/>
            <person name="Zaha A."/>
        </authorList>
    </citation>
    <scope>NUCLEOTIDE SEQUENCE [LARGE SCALE GENOMIC DNA]</scope>
    <source>
        <strain>J / ATCC 25934 / NCTC 10110</strain>
    </source>
</reference>
<proteinExistence type="inferred from homology"/>
<keyword id="KW-0687">Ribonucleoprotein</keyword>
<keyword id="KW-0689">Ribosomal protein</keyword>
<dbReference type="EMBL" id="AE017243">
    <property type="protein sequence ID" value="AAZ44358.1"/>
    <property type="molecule type" value="Genomic_DNA"/>
</dbReference>
<dbReference type="RefSeq" id="WP_011284046.1">
    <property type="nucleotide sequence ID" value="NC_007295.1"/>
</dbReference>
<dbReference type="SMR" id="Q4AA63"/>
<dbReference type="GeneID" id="41334573"/>
<dbReference type="KEGG" id="mhj:MHJ_0267"/>
<dbReference type="eggNOG" id="COG0333">
    <property type="taxonomic scope" value="Bacteria"/>
</dbReference>
<dbReference type="HOGENOM" id="CLU_129084_1_3_14"/>
<dbReference type="OrthoDB" id="9812874at2"/>
<dbReference type="Proteomes" id="UP000000548">
    <property type="component" value="Chromosome"/>
</dbReference>
<dbReference type="GO" id="GO:0015934">
    <property type="term" value="C:large ribosomal subunit"/>
    <property type="evidence" value="ECO:0007669"/>
    <property type="project" value="InterPro"/>
</dbReference>
<dbReference type="GO" id="GO:0003735">
    <property type="term" value="F:structural constituent of ribosome"/>
    <property type="evidence" value="ECO:0007669"/>
    <property type="project" value="InterPro"/>
</dbReference>
<dbReference type="GO" id="GO:0006412">
    <property type="term" value="P:translation"/>
    <property type="evidence" value="ECO:0007669"/>
    <property type="project" value="UniProtKB-UniRule"/>
</dbReference>
<dbReference type="Gene3D" id="1.20.5.640">
    <property type="entry name" value="Single helix bin"/>
    <property type="match status" value="1"/>
</dbReference>
<dbReference type="HAMAP" id="MF_00340">
    <property type="entry name" value="Ribosomal_bL32"/>
    <property type="match status" value="1"/>
</dbReference>
<dbReference type="InterPro" id="IPR002677">
    <property type="entry name" value="Ribosomal_bL32"/>
</dbReference>
<dbReference type="InterPro" id="IPR044957">
    <property type="entry name" value="Ribosomal_bL32_bact"/>
</dbReference>
<dbReference type="InterPro" id="IPR011332">
    <property type="entry name" value="Ribosomal_zn-bd"/>
</dbReference>
<dbReference type="NCBIfam" id="TIGR01031">
    <property type="entry name" value="rpmF_bact"/>
    <property type="match status" value="1"/>
</dbReference>
<dbReference type="PANTHER" id="PTHR35534">
    <property type="entry name" value="50S RIBOSOMAL PROTEIN L32"/>
    <property type="match status" value="1"/>
</dbReference>
<dbReference type="PANTHER" id="PTHR35534:SF1">
    <property type="entry name" value="LARGE RIBOSOMAL SUBUNIT PROTEIN BL32"/>
    <property type="match status" value="1"/>
</dbReference>
<dbReference type="Pfam" id="PF01783">
    <property type="entry name" value="Ribosomal_L32p"/>
    <property type="match status" value="1"/>
</dbReference>
<dbReference type="SUPFAM" id="SSF57829">
    <property type="entry name" value="Zn-binding ribosomal proteins"/>
    <property type="match status" value="1"/>
</dbReference>
<accession>Q4AA63</accession>
<protein>
    <recommendedName>
        <fullName evidence="1">Large ribosomal subunit protein bL32</fullName>
    </recommendedName>
    <alternativeName>
        <fullName evidence="3">50S ribosomal protein L32</fullName>
    </alternativeName>
</protein>
<comment type="similarity">
    <text evidence="1">Belongs to the bacterial ribosomal protein bL32 family.</text>
</comment>
<evidence type="ECO:0000255" key="1">
    <source>
        <dbReference type="HAMAP-Rule" id="MF_00340"/>
    </source>
</evidence>
<evidence type="ECO:0000256" key="2">
    <source>
        <dbReference type="SAM" id="MobiDB-lite"/>
    </source>
</evidence>
<evidence type="ECO:0000305" key="3"/>
<sequence length="65" mass="7521">MAIVPKRKTSKQRKHKRQSHSALKLPNLVSCSNCANKKLPHHICQFCGFYKNRKIISFKAVNDKN</sequence>
<feature type="chain" id="PRO_0000225740" description="Large ribosomal subunit protein bL32">
    <location>
        <begin position="1"/>
        <end position="65"/>
    </location>
</feature>
<feature type="region of interest" description="Disordered" evidence="2">
    <location>
        <begin position="1"/>
        <end position="21"/>
    </location>
</feature>
<feature type="compositionally biased region" description="Basic residues" evidence="2">
    <location>
        <begin position="1"/>
        <end position="19"/>
    </location>
</feature>